<keyword id="KW-0030">Aminoacyl-tRNA synthetase</keyword>
<keyword id="KW-0067">ATP-binding</keyword>
<keyword id="KW-0963">Cytoplasm</keyword>
<keyword id="KW-0436">Ligase</keyword>
<keyword id="KW-0547">Nucleotide-binding</keyword>
<keyword id="KW-0648">Protein biosynthesis</keyword>
<organism>
    <name type="scientific">Brachyspira hyodysenteriae (strain ATCC 49526 / WA1)</name>
    <dbReference type="NCBI Taxonomy" id="565034"/>
    <lineage>
        <taxon>Bacteria</taxon>
        <taxon>Pseudomonadati</taxon>
        <taxon>Spirochaetota</taxon>
        <taxon>Spirochaetia</taxon>
        <taxon>Brachyspirales</taxon>
        <taxon>Brachyspiraceae</taxon>
        <taxon>Brachyspira</taxon>
    </lineage>
</organism>
<comment type="function">
    <text evidence="1">Catalyzes the attachment of serine to tRNA(Ser). Is also able to aminoacylate tRNA(Sec) with serine, to form the misacylated tRNA L-seryl-tRNA(Sec), which will be further converted into selenocysteinyl-tRNA(Sec).</text>
</comment>
<comment type="catalytic activity">
    <reaction evidence="1">
        <text>tRNA(Ser) + L-serine + ATP = L-seryl-tRNA(Ser) + AMP + diphosphate + H(+)</text>
        <dbReference type="Rhea" id="RHEA:12292"/>
        <dbReference type="Rhea" id="RHEA-COMP:9669"/>
        <dbReference type="Rhea" id="RHEA-COMP:9703"/>
        <dbReference type="ChEBI" id="CHEBI:15378"/>
        <dbReference type="ChEBI" id="CHEBI:30616"/>
        <dbReference type="ChEBI" id="CHEBI:33019"/>
        <dbReference type="ChEBI" id="CHEBI:33384"/>
        <dbReference type="ChEBI" id="CHEBI:78442"/>
        <dbReference type="ChEBI" id="CHEBI:78533"/>
        <dbReference type="ChEBI" id="CHEBI:456215"/>
        <dbReference type="EC" id="6.1.1.11"/>
    </reaction>
</comment>
<comment type="catalytic activity">
    <reaction evidence="1">
        <text>tRNA(Sec) + L-serine + ATP = L-seryl-tRNA(Sec) + AMP + diphosphate + H(+)</text>
        <dbReference type="Rhea" id="RHEA:42580"/>
        <dbReference type="Rhea" id="RHEA-COMP:9742"/>
        <dbReference type="Rhea" id="RHEA-COMP:10128"/>
        <dbReference type="ChEBI" id="CHEBI:15378"/>
        <dbReference type="ChEBI" id="CHEBI:30616"/>
        <dbReference type="ChEBI" id="CHEBI:33019"/>
        <dbReference type="ChEBI" id="CHEBI:33384"/>
        <dbReference type="ChEBI" id="CHEBI:78442"/>
        <dbReference type="ChEBI" id="CHEBI:78533"/>
        <dbReference type="ChEBI" id="CHEBI:456215"/>
        <dbReference type="EC" id="6.1.1.11"/>
    </reaction>
</comment>
<comment type="pathway">
    <text evidence="1">Aminoacyl-tRNA biosynthesis; selenocysteinyl-tRNA(Sec) biosynthesis; L-seryl-tRNA(Sec) from L-serine and tRNA(Sec): step 1/1.</text>
</comment>
<comment type="subunit">
    <text evidence="1">Homodimer. The tRNA molecule binds across the dimer.</text>
</comment>
<comment type="subcellular location">
    <subcellularLocation>
        <location evidence="1">Cytoplasm</location>
    </subcellularLocation>
</comment>
<comment type="domain">
    <text evidence="1">Consists of two distinct domains, a catalytic core and a N-terminal extension that is involved in tRNA binding.</text>
</comment>
<comment type="similarity">
    <text evidence="1">Belongs to the class-II aminoacyl-tRNA synthetase family. Type-1 seryl-tRNA synthetase subfamily.</text>
</comment>
<gene>
    <name evidence="1" type="primary">serS</name>
    <name type="ordered locus">BHWA1_01617</name>
</gene>
<accession>C0R1U9</accession>
<proteinExistence type="inferred from homology"/>
<name>SYS_BRAHW</name>
<dbReference type="EC" id="6.1.1.11" evidence="1"/>
<dbReference type="EMBL" id="CP001357">
    <property type="protein sequence ID" value="ACN84087.1"/>
    <property type="molecule type" value="Genomic_DNA"/>
</dbReference>
<dbReference type="RefSeq" id="WP_012671129.1">
    <property type="nucleotide sequence ID" value="NC_012225.1"/>
</dbReference>
<dbReference type="SMR" id="C0R1U9"/>
<dbReference type="STRING" id="565034.BHWA1_01617"/>
<dbReference type="KEGG" id="bhy:BHWA1_01617"/>
<dbReference type="eggNOG" id="COG0172">
    <property type="taxonomic scope" value="Bacteria"/>
</dbReference>
<dbReference type="HOGENOM" id="CLU_023797_1_1_12"/>
<dbReference type="UniPathway" id="UPA00906">
    <property type="reaction ID" value="UER00895"/>
</dbReference>
<dbReference type="Proteomes" id="UP000001803">
    <property type="component" value="Chromosome"/>
</dbReference>
<dbReference type="GO" id="GO:0005737">
    <property type="term" value="C:cytoplasm"/>
    <property type="evidence" value="ECO:0007669"/>
    <property type="project" value="UniProtKB-SubCell"/>
</dbReference>
<dbReference type="GO" id="GO:0005524">
    <property type="term" value="F:ATP binding"/>
    <property type="evidence" value="ECO:0007669"/>
    <property type="project" value="UniProtKB-UniRule"/>
</dbReference>
<dbReference type="GO" id="GO:0004828">
    <property type="term" value="F:serine-tRNA ligase activity"/>
    <property type="evidence" value="ECO:0007669"/>
    <property type="project" value="UniProtKB-UniRule"/>
</dbReference>
<dbReference type="GO" id="GO:0016260">
    <property type="term" value="P:selenocysteine biosynthetic process"/>
    <property type="evidence" value="ECO:0007669"/>
    <property type="project" value="UniProtKB-UniRule"/>
</dbReference>
<dbReference type="GO" id="GO:0006434">
    <property type="term" value="P:seryl-tRNA aminoacylation"/>
    <property type="evidence" value="ECO:0007669"/>
    <property type="project" value="UniProtKB-UniRule"/>
</dbReference>
<dbReference type="CDD" id="cd00770">
    <property type="entry name" value="SerRS_core"/>
    <property type="match status" value="1"/>
</dbReference>
<dbReference type="Gene3D" id="3.30.930.10">
    <property type="entry name" value="Bira Bifunctional Protein, Domain 2"/>
    <property type="match status" value="1"/>
</dbReference>
<dbReference type="Gene3D" id="1.10.287.40">
    <property type="entry name" value="Serine-tRNA synthetase, tRNA binding domain"/>
    <property type="match status" value="1"/>
</dbReference>
<dbReference type="HAMAP" id="MF_00176">
    <property type="entry name" value="Ser_tRNA_synth_type1"/>
    <property type="match status" value="1"/>
</dbReference>
<dbReference type="InterPro" id="IPR002314">
    <property type="entry name" value="aa-tRNA-synt_IIb"/>
</dbReference>
<dbReference type="InterPro" id="IPR006195">
    <property type="entry name" value="aa-tRNA-synth_II"/>
</dbReference>
<dbReference type="InterPro" id="IPR045864">
    <property type="entry name" value="aa-tRNA-synth_II/BPL/LPL"/>
</dbReference>
<dbReference type="InterPro" id="IPR002317">
    <property type="entry name" value="Ser-tRNA-ligase_type_1"/>
</dbReference>
<dbReference type="InterPro" id="IPR015866">
    <property type="entry name" value="Ser-tRNA-synth_1_N"/>
</dbReference>
<dbReference type="InterPro" id="IPR042103">
    <property type="entry name" value="SerRS_1_N_sf"/>
</dbReference>
<dbReference type="InterPro" id="IPR033729">
    <property type="entry name" value="SerRS_core"/>
</dbReference>
<dbReference type="InterPro" id="IPR010978">
    <property type="entry name" value="tRNA-bd_arm"/>
</dbReference>
<dbReference type="NCBIfam" id="TIGR00414">
    <property type="entry name" value="serS"/>
    <property type="match status" value="1"/>
</dbReference>
<dbReference type="PANTHER" id="PTHR43697:SF1">
    <property type="entry name" value="SERINE--TRNA LIGASE"/>
    <property type="match status" value="1"/>
</dbReference>
<dbReference type="PANTHER" id="PTHR43697">
    <property type="entry name" value="SERYL-TRNA SYNTHETASE"/>
    <property type="match status" value="1"/>
</dbReference>
<dbReference type="Pfam" id="PF02403">
    <property type="entry name" value="Seryl_tRNA_N"/>
    <property type="match status" value="1"/>
</dbReference>
<dbReference type="Pfam" id="PF00587">
    <property type="entry name" value="tRNA-synt_2b"/>
    <property type="match status" value="1"/>
</dbReference>
<dbReference type="PIRSF" id="PIRSF001529">
    <property type="entry name" value="Ser-tRNA-synth_IIa"/>
    <property type="match status" value="1"/>
</dbReference>
<dbReference type="PRINTS" id="PR00981">
    <property type="entry name" value="TRNASYNTHSER"/>
</dbReference>
<dbReference type="SUPFAM" id="SSF55681">
    <property type="entry name" value="Class II aaRS and biotin synthetases"/>
    <property type="match status" value="1"/>
</dbReference>
<dbReference type="SUPFAM" id="SSF46589">
    <property type="entry name" value="tRNA-binding arm"/>
    <property type="match status" value="1"/>
</dbReference>
<dbReference type="PROSITE" id="PS50862">
    <property type="entry name" value="AA_TRNA_LIGASE_II"/>
    <property type="match status" value="1"/>
</dbReference>
<sequence length="426" mass="49086">MIDVKLIRENIELVEENLRKRRSKVSLDKLKALEHERLDLLKEVEQDRAKKNESSKKIGEYMKAGNKEEAEKIKEEMKNFTESLNKKEEKLSQLEEAVNNEILYLPNMLSEDVPDGDDEKANKEIIRWGEPRKFDFEVKDHVDIAMGLDILDIERAVRMSRTRFSLMKGKGAALERALINFMLKKHTSEHGYTEYVPPILVNGRTMTGTGQLPKFEEDLFKTTDDPALYLIPTAEVPLTNIYREEIIPENMLPLYCTAYTPCFRSEAGSYGRDMRGLIRQHQFDKVELVKICAADKSKEEHEKMLKDAESILQALELPYRVVVLSSGDIGNAAYKTFDIEVWLPSQNMYREISSVSNCWDYQARRMQMRTRRNGKTELVHTLNGSGIAVGRTWIAILENYQQADGSVIIPDALRPFTGFDKIEKPN</sequence>
<feature type="chain" id="PRO_1000123873" description="Serine--tRNA ligase">
    <location>
        <begin position="1"/>
        <end position="426"/>
    </location>
</feature>
<feature type="binding site" evidence="1">
    <location>
        <begin position="233"/>
        <end position="235"/>
    </location>
    <ligand>
        <name>L-serine</name>
        <dbReference type="ChEBI" id="CHEBI:33384"/>
    </ligand>
</feature>
<feature type="binding site" evidence="1">
    <location>
        <begin position="264"/>
        <end position="266"/>
    </location>
    <ligand>
        <name>ATP</name>
        <dbReference type="ChEBI" id="CHEBI:30616"/>
    </ligand>
</feature>
<feature type="binding site" evidence="1">
    <location>
        <position position="287"/>
    </location>
    <ligand>
        <name>L-serine</name>
        <dbReference type="ChEBI" id="CHEBI:33384"/>
    </ligand>
</feature>
<feature type="binding site" evidence="1">
    <location>
        <begin position="351"/>
        <end position="354"/>
    </location>
    <ligand>
        <name>ATP</name>
        <dbReference type="ChEBI" id="CHEBI:30616"/>
    </ligand>
</feature>
<feature type="binding site" evidence="1">
    <location>
        <position position="385"/>
    </location>
    <ligand>
        <name>L-serine</name>
        <dbReference type="ChEBI" id="CHEBI:33384"/>
    </ligand>
</feature>
<evidence type="ECO:0000255" key="1">
    <source>
        <dbReference type="HAMAP-Rule" id="MF_00176"/>
    </source>
</evidence>
<reference key="1">
    <citation type="journal article" date="2009" name="PLoS ONE">
        <title>Genome sequence of the pathogenic intestinal spirochete Brachyspira hyodysenteriae reveals adaptations to its lifestyle in the porcine large intestine.</title>
        <authorList>
            <person name="Bellgard M.I."/>
            <person name="Wanchanthuek P."/>
            <person name="La T."/>
            <person name="Ryan K."/>
            <person name="Moolhuijzen P."/>
            <person name="Albertyn Z."/>
            <person name="Shaban B."/>
            <person name="Motro Y."/>
            <person name="Dunn D.S."/>
            <person name="Schibeci D."/>
            <person name="Hunter A."/>
            <person name="Barrero R."/>
            <person name="Phillips N.D."/>
            <person name="Hampson D.J."/>
        </authorList>
    </citation>
    <scope>NUCLEOTIDE SEQUENCE [LARGE SCALE GENOMIC DNA]</scope>
    <source>
        <strain>ATCC 49526 / WA1</strain>
    </source>
</reference>
<protein>
    <recommendedName>
        <fullName evidence="1">Serine--tRNA ligase</fullName>
        <ecNumber evidence="1">6.1.1.11</ecNumber>
    </recommendedName>
    <alternativeName>
        <fullName evidence="1">Seryl-tRNA synthetase</fullName>
        <shortName evidence="1">SerRS</shortName>
    </alternativeName>
    <alternativeName>
        <fullName evidence="1">Seryl-tRNA(Ser/Sec) synthetase</fullName>
    </alternativeName>
</protein>